<sequence>MAQTLYDKLWNTHVVHTEEDGTTLLYIDRQLLHEVTSPQAFEGLKIAQRPVWRISANLAVSDHNVPTTDRSHGIADPVSKLQVDTLDSNCDAFGITQFKMNDVRQGIVHIIGPEQGATLPGMTIVCGDSHTSTHGAFGALAHGIGTSEVEHVLATQTLLQKKSKNMLVKVEGALPRGCTAKDIVLAIIGKIGTAGGTGYAIEFGGSTIRALTMEGRMTVCNMAIEAGARAGMVAVDDTTIDYLKGRPFVPTGAEWDQAVEYWRQFKSDDGAQFDRVVELNAAEIVPQVTWGTSPEMVTSIDGRVPDPEREKDPVKRDAMERALAYMALEPNTPIESIKVDKIFIGSCTNARIEDIRAAAYVVKKLNRRVASNVRLAMVVPGSGLVKAQAEREGLDKVFTDAGFEWREPGCSMCLAMNADRLEPGERCASTSNRNFEGRQGAGGRTHLVSPAMAAAAAIEGHFVDIRQLG</sequence>
<comment type="function">
    <text evidence="1">Catalyzes the isomerization between 2-isopropylmalate and 3-isopropylmalate, via the formation of 2-isopropylmaleate.</text>
</comment>
<comment type="catalytic activity">
    <reaction evidence="1">
        <text>(2R,3S)-3-isopropylmalate = (2S)-2-isopropylmalate</text>
        <dbReference type="Rhea" id="RHEA:32287"/>
        <dbReference type="ChEBI" id="CHEBI:1178"/>
        <dbReference type="ChEBI" id="CHEBI:35121"/>
        <dbReference type="EC" id="4.2.1.33"/>
    </reaction>
</comment>
<comment type="cofactor">
    <cofactor evidence="1">
        <name>[4Fe-4S] cluster</name>
        <dbReference type="ChEBI" id="CHEBI:49883"/>
    </cofactor>
    <text evidence="1">Binds 1 [4Fe-4S] cluster per subunit.</text>
</comment>
<comment type="pathway">
    <text evidence="1">Amino-acid biosynthesis; L-leucine biosynthesis; L-leucine from 3-methyl-2-oxobutanoate: step 2/4.</text>
</comment>
<comment type="subunit">
    <text evidence="1">Heterodimer of LeuC and LeuD.</text>
</comment>
<comment type="similarity">
    <text evidence="1">Belongs to the aconitase/IPM isomerase family. LeuC type 1 subfamily.</text>
</comment>
<organism>
    <name type="scientific">Burkholderia orbicola (strain AU 1054)</name>
    <dbReference type="NCBI Taxonomy" id="331271"/>
    <lineage>
        <taxon>Bacteria</taxon>
        <taxon>Pseudomonadati</taxon>
        <taxon>Pseudomonadota</taxon>
        <taxon>Betaproteobacteria</taxon>
        <taxon>Burkholderiales</taxon>
        <taxon>Burkholderiaceae</taxon>
        <taxon>Burkholderia</taxon>
        <taxon>Burkholderia cepacia complex</taxon>
        <taxon>Burkholderia orbicola</taxon>
    </lineage>
</organism>
<reference key="1">
    <citation type="submission" date="2006-05" db="EMBL/GenBank/DDBJ databases">
        <title>Complete sequence of chromosome 2 of Burkholderia cenocepacia AU 1054.</title>
        <authorList>
            <consortium name="US DOE Joint Genome Institute"/>
            <person name="Copeland A."/>
            <person name="Lucas S."/>
            <person name="Lapidus A."/>
            <person name="Barry K."/>
            <person name="Detter J.C."/>
            <person name="Glavina del Rio T."/>
            <person name="Hammon N."/>
            <person name="Israni S."/>
            <person name="Dalin E."/>
            <person name="Tice H."/>
            <person name="Pitluck S."/>
            <person name="Chain P."/>
            <person name="Malfatti S."/>
            <person name="Shin M."/>
            <person name="Vergez L."/>
            <person name="Schmutz J."/>
            <person name="Larimer F."/>
            <person name="Land M."/>
            <person name="Hauser L."/>
            <person name="Kyrpides N."/>
            <person name="Lykidis A."/>
            <person name="LiPuma J.J."/>
            <person name="Konstantinidis K."/>
            <person name="Tiedje J.M."/>
            <person name="Richardson P."/>
        </authorList>
    </citation>
    <scope>NUCLEOTIDE SEQUENCE [LARGE SCALE GENOMIC DNA]</scope>
    <source>
        <strain>AU 1054</strain>
    </source>
</reference>
<protein>
    <recommendedName>
        <fullName evidence="1">3-isopropylmalate dehydratase large subunit</fullName>
        <ecNumber evidence="1">4.2.1.33</ecNumber>
    </recommendedName>
    <alternativeName>
        <fullName evidence="1">Alpha-IPM isomerase</fullName>
        <shortName evidence="1">IPMI</shortName>
    </alternativeName>
    <alternativeName>
        <fullName evidence="1">Isopropylmalate isomerase</fullName>
    </alternativeName>
</protein>
<accession>Q1BM55</accession>
<name>LEUC_BURO1</name>
<feature type="chain" id="PRO_1000063533" description="3-isopropylmalate dehydratase large subunit">
    <location>
        <begin position="1"/>
        <end position="469"/>
    </location>
</feature>
<feature type="binding site" evidence="1">
    <location>
        <position position="347"/>
    </location>
    <ligand>
        <name>[4Fe-4S] cluster</name>
        <dbReference type="ChEBI" id="CHEBI:49883"/>
    </ligand>
</feature>
<feature type="binding site" evidence="1">
    <location>
        <position position="410"/>
    </location>
    <ligand>
        <name>[4Fe-4S] cluster</name>
        <dbReference type="ChEBI" id="CHEBI:49883"/>
    </ligand>
</feature>
<feature type="binding site" evidence="1">
    <location>
        <position position="413"/>
    </location>
    <ligand>
        <name>[4Fe-4S] cluster</name>
        <dbReference type="ChEBI" id="CHEBI:49883"/>
    </ligand>
</feature>
<proteinExistence type="inferred from homology"/>
<keyword id="KW-0004">4Fe-4S</keyword>
<keyword id="KW-0028">Amino-acid biosynthesis</keyword>
<keyword id="KW-0100">Branched-chain amino acid biosynthesis</keyword>
<keyword id="KW-0408">Iron</keyword>
<keyword id="KW-0411">Iron-sulfur</keyword>
<keyword id="KW-0432">Leucine biosynthesis</keyword>
<keyword id="KW-0456">Lyase</keyword>
<keyword id="KW-0479">Metal-binding</keyword>
<gene>
    <name evidence="1" type="primary">leuC</name>
    <name type="ordered locus">Bcen_4418</name>
</gene>
<dbReference type="EC" id="4.2.1.33" evidence="1"/>
<dbReference type="EMBL" id="CP000379">
    <property type="protein sequence ID" value="ABF79300.1"/>
    <property type="molecule type" value="Genomic_DNA"/>
</dbReference>
<dbReference type="SMR" id="Q1BM55"/>
<dbReference type="HOGENOM" id="CLU_006714_3_4_4"/>
<dbReference type="UniPathway" id="UPA00048">
    <property type="reaction ID" value="UER00071"/>
</dbReference>
<dbReference type="GO" id="GO:0003861">
    <property type="term" value="F:3-isopropylmalate dehydratase activity"/>
    <property type="evidence" value="ECO:0007669"/>
    <property type="project" value="UniProtKB-UniRule"/>
</dbReference>
<dbReference type="GO" id="GO:0051539">
    <property type="term" value="F:4 iron, 4 sulfur cluster binding"/>
    <property type="evidence" value="ECO:0007669"/>
    <property type="project" value="UniProtKB-KW"/>
</dbReference>
<dbReference type="GO" id="GO:0046872">
    <property type="term" value="F:metal ion binding"/>
    <property type="evidence" value="ECO:0007669"/>
    <property type="project" value="UniProtKB-KW"/>
</dbReference>
<dbReference type="GO" id="GO:0009098">
    <property type="term" value="P:L-leucine biosynthetic process"/>
    <property type="evidence" value="ECO:0007669"/>
    <property type="project" value="UniProtKB-UniRule"/>
</dbReference>
<dbReference type="CDD" id="cd01583">
    <property type="entry name" value="IPMI"/>
    <property type="match status" value="1"/>
</dbReference>
<dbReference type="FunFam" id="3.30.499.10:FF:000007">
    <property type="entry name" value="3-isopropylmalate dehydratase large subunit"/>
    <property type="match status" value="1"/>
</dbReference>
<dbReference type="Gene3D" id="3.30.499.10">
    <property type="entry name" value="Aconitase, domain 3"/>
    <property type="match status" value="2"/>
</dbReference>
<dbReference type="HAMAP" id="MF_01026">
    <property type="entry name" value="LeuC_type1"/>
    <property type="match status" value="1"/>
</dbReference>
<dbReference type="InterPro" id="IPR004430">
    <property type="entry name" value="3-IsopropMal_deHydase_lsu"/>
</dbReference>
<dbReference type="InterPro" id="IPR015931">
    <property type="entry name" value="Acnase/IPM_dHydase_lsu_aba_1/3"/>
</dbReference>
<dbReference type="InterPro" id="IPR001030">
    <property type="entry name" value="Acoase/IPM_deHydtase_lsu_aba"/>
</dbReference>
<dbReference type="InterPro" id="IPR018136">
    <property type="entry name" value="Aconitase_4Fe-4S_BS"/>
</dbReference>
<dbReference type="InterPro" id="IPR036008">
    <property type="entry name" value="Aconitase_4Fe-4S_dom"/>
</dbReference>
<dbReference type="InterPro" id="IPR050067">
    <property type="entry name" value="IPM_dehydratase_rel_enz"/>
</dbReference>
<dbReference type="InterPro" id="IPR033941">
    <property type="entry name" value="IPMI_cat"/>
</dbReference>
<dbReference type="NCBIfam" id="TIGR00170">
    <property type="entry name" value="leuC"/>
    <property type="match status" value="1"/>
</dbReference>
<dbReference type="NCBIfam" id="NF004016">
    <property type="entry name" value="PRK05478.1"/>
    <property type="match status" value="1"/>
</dbReference>
<dbReference type="NCBIfam" id="NF009116">
    <property type="entry name" value="PRK12466.1"/>
    <property type="match status" value="1"/>
</dbReference>
<dbReference type="PANTHER" id="PTHR43822:SF9">
    <property type="entry name" value="3-ISOPROPYLMALATE DEHYDRATASE"/>
    <property type="match status" value="1"/>
</dbReference>
<dbReference type="PANTHER" id="PTHR43822">
    <property type="entry name" value="HOMOACONITASE, MITOCHONDRIAL-RELATED"/>
    <property type="match status" value="1"/>
</dbReference>
<dbReference type="Pfam" id="PF00330">
    <property type="entry name" value="Aconitase"/>
    <property type="match status" value="1"/>
</dbReference>
<dbReference type="PRINTS" id="PR00415">
    <property type="entry name" value="ACONITASE"/>
</dbReference>
<dbReference type="SUPFAM" id="SSF53732">
    <property type="entry name" value="Aconitase iron-sulfur domain"/>
    <property type="match status" value="1"/>
</dbReference>
<dbReference type="PROSITE" id="PS00450">
    <property type="entry name" value="ACONITASE_1"/>
    <property type="match status" value="1"/>
</dbReference>
<dbReference type="PROSITE" id="PS01244">
    <property type="entry name" value="ACONITASE_2"/>
    <property type="match status" value="1"/>
</dbReference>
<evidence type="ECO:0000255" key="1">
    <source>
        <dbReference type="HAMAP-Rule" id="MF_01026"/>
    </source>
</evidence>